<organism>
    <name type="scientific">Yersinia pseudotuberculosis serotype O:1b (strain IP 31758)</name>
    <dbReference type="NCBI Taxonomy" id="349747"/>
    <lineage>
        <taxon>Bacteria</taxon>
        <taxon>Pseudomonadati</taxon>
        <taxon>Pseudomonadota</taxon>
        <taxon>Gammaproteobacteria</taxon>
        <taxon>Enterobacterales</taxon>
        <taxon>Yersiniaceae</taxon>
        <taxon>Yersinia</taxon>
    </lineage>
</organism>
<reference key="1">
    <citation type="journal article" date="2007" name="PLoS Genet.">
        <title>The complete genome sequence of Yersinia pseudotuberculosis IP31758, the causative agent of Far East scarlet-like fever.</title>
        <authorList>
            <person name="Eppinger M."/>
            <person name="Rosovitz M.J."/>
            <person name="Fricke W.F."/>
            <person name="Rasko D.A."/>
            <person name="Kokorina G."/>
            <person name="Fayolle C."/>
            <person name="Lindler L.E."/>
            <person name="Carniel E."/>
            <person name="Ravel J."/>
        </authorList>
    </citation>
    <scope>NUCLEOTIDE SEQUENCE [LARGE SCALE GENOMIC DNA]</scope>
    <source>
        <strain>IP 31758</strain>
    </source>
</reference>
<protein>
    <recommendedName>
        <fullName evidence="1">Fructose-1,6-bisphosphatase class 1</fullName>
        <shortName evidence="1">FBPase class 1</shortName>
        <ecNumber evidence="1">3.1.3.11</ecNumber>
    </recommendedName>
    <alternativeName>
        <fullName evidence="1">D-fructose-1,6-bisphosphate 1-phosphohydrolase class 1</fullName>
    </alternativeName>
</protein>
<evidence type="ECO:0000255" key="1">
    <source>
        <dbReference type="HAMAP-Rule" id="MF_01855"/>
    </source>
</evidence>
<dbReference type="EC" id="3.1.3.11" evidence="1"/>
<dbReference type="EMBL" id="CP000720">
    <property type="protein sequence ID" value="ABS46554.1"/>
    <property type="molecule type" value="Genomic_DNA"/>
</dbReference>
<dbReference type="RefSeq" id="WP_011191626.1">
    <property type="nucleotide sequence ID" value="NC_009708.1"/>
</dbReference>
<dbReference type="SMR" id="A7FMU7"/>
<dbReference type="GeneID" id="96663958"/>
<dbReference type="KEGG" id="ypi:YpsIP31758_3621"/>
<dbReference type="HOGENOM" id="CLU_039977_2_2_6"/>
<dbReference type="UniPathway" id="UPA00138"/>
<dbReference type="Proteomes" id="UP000002412">
    <property type="component" value="Chromosome"/>
</dbReference>
<dbReference type="GO" id="GO:0005829">
    <property type="term" value="C:cytosol"/>
    <property type="evidence" value="ECO:0007669"/>
    <property type="project" value="TreeGrafter"/>
</dbReference>
<dbReference type="GO" id="GO:0042132">
    <property type="term" value="F:fructose 1,6-bisphosphate 1-phosphatase activity"/>
    <property type="evidence" value="ECO:0007669"/>
    <property type="project" value="UniProtKB-UniRule"/>
</dbReference>
<dbReference type="GO" id="GO:0000287">
    <property type="term" value="F:magnesium ion binding"/>
    <property type="evidence" value="ECO:0007669"/>
    <property type="project" value="UniProtKB-UniRule"/>
</dbReference>
<dbReference type="GO" id="GO:0030388">
    <property type="term" value="P:fructose 1,6-bisphosphate metabolic process"/>
    <property type="evidence" value="ECO:0007669"/>
    <property type="project" value="TreeGrafter"/>
</dbReference>
<dbReference type="GO" id="GO:0006002">
    <property type="term" value="P:fructose 6-phosphate metabolic process"/>
    <property type="evidence" value="ECO:0007669"/>
    <property type="project" value="TreeGrafter"/>
</dbReference>
<dbReference type="GO" id="GO:0006000">
    <property type="term" value="P:fructose metabolic process"/>
    <property type="evidence" value="ECO:0007669"/>
    <property type="project" value="TreeGrafter"/>
</dbReference>
<dbReference type="GO" id="GO:0006094">
    <property type="term" value="P:gluconeogenesis"/>
    <property type="evidence" value="ECO:0007669"/>
    <property type="project" value="UniProtKB-UniRule"/>
</dbReference>
<dbReference type="GO" id="GO:0005986">
    <property type="term" value="P:sucrose biosynthetic process"/>
    <property type="evidence" value="ECO:0007669"/>
    <property type="project" value="TreeGrafter"/>
</dbReference>
<dbReference type="CDD" id="cd00354">
    <property type="entry name" value="FBPase"/>
    <property type="match status" value="1"/>
</dbReference>
<dbReference type="FunFam" id="3.30.540.10:FF:000002">
    <property type="entry name" value="Fructose-1,6-bisphosphatase class 1"/>
    <property type="match status" value="1"/>
</dbReference>
<dbReference type="FunFam" id="3.40.190.80:FF:000001">
    <property type="entry name" value="Fructose-1,6-bisphosphatase class 1"/>
    <property type="match status" value="1"/>
</dbReference>
<dbReference type="Gene3D" id="3.40.190.80">
    <property type="match status" value="1"/>
</dbReference>
<dbReference type="Gene3D" id="3.30.540.10">
    <property type="entry name" value="Fructose-1,6-Bisphosphatase, subunit A, domain 1"/>
    <property type="match status" value="1"/>
</dbReference>
<dbReference type="HAMAP" id="MF_01855">
    <property type="entry name" value="FBPase_class1"/>
    <property type="match status" value="1"/>
</dbReference>
<dbReference type="InterPro" id="IPR044015">
    <property type="entry name" value="FBPase_C_dom"/>
</dbReference>
<dbReference type="InterPro" id="IPR000146">
    <property type="entry name" value="FBPase_class-1"/>
</dbReference>
<dbReference type="InterPro" id="IPR033391">
    <property type="entry name" value="FBPase_N"/>
</dbReference>
<dbReference type="InterPro" id="IPR028343">
    <property type="entry name" value="FBPtase"/>
</dbReference>
<dbReference type="InterPro" id="IPR020548">
    <property type="entry name" value="Fructose_bisphosphatase_AS"/>
</dbReference>
<dbReference type="NCBIfam" id="NF006778">
    <property type="entry name" value="PRK09293.1-1"/>
    <property type="match status" value="1"/>
</dbReference>
<dbReference type="PANTHER" id="PTHR11556">
    <property type="entry name" value="FRUCTOSE-1,6-BISPHOSPHATASE-RELATED"/>
    <property type="match status" value="1"/>
</dbReference>
<dbReference type="PANTHER" id="PTHR11556:SF35">
    <property type="entry name" value="SEDOHEPTULOSE-1,7-BISPHOSPHATASE, CHLOROPLASTIC"/>
    <property type="match status" value="1"/>
</dbReference>
<dbReference type="Pfam" id="PF00316">
    <property type="entry name" value="FBPase"/>
    <property type="match status" value="1"/>
</dbReference>
<dbReference type="Pfam" id="PF18913">
    <property type="entry name" value="FBPase_C"/>
    <property type="match status" value="1"/>
</dbReference>
<dbReference type="PIRSF" id="PIRSF500210">
    <property type="entry name" value="FBPtase"/>
    <property type="match status" value="1"/>
</dbReference>
<dbReference type="PIRSF" id="PIRSF000904">
    <property type="entry name" value="FBPtase_SBPase"/>
    <property type="match status" value="1"/>
</dbReference>
<dbReference type="PRINTS" id="PR00115">
    <property type="entry name" value="F16BPHPHTASE"/>
</dbReference>
<dbReference type="SUPFAM" id="SSF56655">
    <property type="entry name" value="Carbohydrate phosphatase"/>
    <property type="match status" value="1"/>
</dbReference>
<dbReference type="PROSITE" id="PS00124">
    <property type="entry name" value="FBPASE"/>
    <property type="match status" value="1"/>
</dbReference>
<proteinExistence type="inferred from homology"/>
<sequence length="337" mass="36966">MKTLGEFIVEKQLDFSHATGELTALLSAIKLGAKIIHRDINKAGLVDILGASGVSNIQGEDQMKLDLFANEKLKAALKARGEVAGIASEEEDDIVIFDGGRAENAKYVVLMDPLDGSSNIDVNVSVGTIFSIYRRITPFGTPITEEDFLQPGTKQVAAGYVVYGSSTMLVYTTGYGVHAFTYDPSLGVFCLSHEKVRYPATGCMYSINEGNYIKFPLGVKKYIKYCQEQDEATKRPYTSRYIGSLVADFHRNLLKGGIYIYPSTASHPQGKLRLLYECNPMAFLAEQAGGKATDGVNRILDIVPEKLHQRAPFFVGTKSMVEDAEGFIAKFPDEEAK</sequence>
<name>F16PA_YERP3</name>
<keyword id="KW-0119">Carbohydrate metabolism</keyword>
<keyword id="KW-0963">Cytoplasm</keyword>
<keyword id="KW-0378">Hydrolase</keyword>
<keyword id="KW-0460">Magnesium</keyword>
<keyword id="KW-0479">Metal-binding</keyword>
<accession>A7FMU7</accession>
<feature type="chain" id="PRO_0000364766" description="Fructose-1,6-bisphosphatase class 1">
    <location>
        <begin position="1"/>
        <end position="337"/>
    </location>
</feature>
<feature type="binding site" evidence="1">
    <location>
        <position position="89"/>
    </location>
    <ligand>
        <name>Mg(2+)</name>
        <dbReference type="ChEBI" id="CHEBI:18420"/>
        <label>1</label>
    </ligand>
</feature>
<feature type="binding site" evidence="1">
    <location>
        <position position="112"/>
    </location>
    <ligand>
        <name>Mg(2+)</name>
        <dbReference type="ChEBI" id="CHEBI:18420"/>
        <label>1</label>
    </ligand>
</feature>
<feature type="binding site" evidence="1">
    <location>
        <position position="112"/>
    </location>
    <ligand>
        <name>Mg(2+)</name>
        <dbReference type="ChEBI" id="CHEBI:18420"/>
        <label>2</label>
    </ligand>
</feature>
<feature type="binding site" evidence="1">
    <location>
        <position position="114"/>
    </location>
    <ligand>
        <name>Mg(2+)</name>
        <dbReference type="ChEBI" id="CHEBI:18420"/>
        <label>1</label>
    </ligand>
</feature>
<feature type="binding site" evidence="1">
    <location>
        <begin position="115"/>
        <end position="118"/>
    </location>
    <ligand>
        <name>substrate</name>
    </ligand>
</feature>
<feature type="binding site" evidence="1">
    <location>
        <position position="115"/>
    </location>
    <ligand>
        <name>Mg(2+)</name>
        <dbReference type="ChEBI" id="CHEBI:18420"/>
        <label>2</label>
    </ligand>
</feature>
<feature type="binding site" evidence="1">
    <location>
        <position position="208"/>
    </location>
    <ligand>
        <name>substrate</name>
    </ligand>
</feature>
<feature type="binding site" evidence="1">
    <location>
        <position position="241"/>
    </location>
    <ligand>
        <name>substrate</name>
    </ligand>
</feature>
<feature type="binding site" evidence="1">
    <location>
        <position position="271"/>
    </location>
    <ligand>
        <name>substrate</name>
    </ligand>
</feature>
<feature type="binding site" evidence="1">
    <location>
        <position position="277"/>
    </location>
    <ligand>
        <name>Mg(2+)</name>
        <dbReference type="ChEBI" id="CHEBI:18420"/>
        <label>2</label>
    </ligand>
</feature>
<gene>
    <name evidence="1" type="primary">fbp</name>
    <name type="ordered locus">YpsIP31758_3621</name>
</gene>
<comment type="catalytic activity">
    <reaction evidence="1">
        <text>beta-D-fructose 1,6-bisphosphate + H2O = beta-D-fructose 6-phosphate + phosphate</text>
        <dbReference type="Rhea" id="RHEA:11064"/>
        <dbReference type="ChEBI" id="CHEBI:15377"/>
        <dbReference type="ChEBI" id="CHEBI:32966"/>
        <dbReference type="ChEBI" id="CHEBI:43474"/>
        <dbReference type="ChEBI" id="CHEBI:57634"/>
        <dbReference type="EC" id="3.1.3.11"/>
    </reaction>
</comment>
<comment type="cofactor">
    <cofactor evidence="1">
        <name>Mg(2+)</name>
        <dbReference type="ChEBI" id="CHEBI:18420"/>
    </cofactor>
    <text evidence="1">Binds 2 magnesium ions per subunit.</text>
</comment>
<comment type="pathway">
    <text evidence="1">Carbohydrate biosynthesis; gluconeogenesis.</text>
</comment>
<comment type="subunit">
    <text evidence="1">Homotetramer.</text>
</comment>
<comment type="subcellular location">
    <subcellularLocation>
        <location evidence="1">Cytoplasm</location>
    </subcellularLocation>
</comment>
<comment type="similarity">
    <text evidence="1">Belongs to the FBPase class 1 family.</text>
</comment>